<organism>
    <name type="scientific">Hyphomonas neptunium (strain ATCC 15444)</name>
    <dbReference type="NCBI Taxonomy" id="228405"/>
    <lineage>
        <taxon>Bacteria</taxon>
        <taxon>Pseudomonadati</taxon>
        <taxon>Pseudomonadota</taxon>
        <taxon>Alphaproteobacteria</taxon>
        <taxon>Hyphomonadales</taxon>
        <taxon>Hyphomonadaceae</taxon>
        <taxon>Hyphomonas</taxon>
    </lineage>
</organism>
<protein>
    <recommendedName>
        <fullName evidence="1">L-ectoine synthase</fullName>
        <ecNumber evidence="1">4.2.1.108</ecNumber>
    </recommendedName>
    <alternativeName>
        <fullName evidence="1">N-acetyldiaminobutyrate dehydratase</fullName>
    </alternativeName>
</protein>
<reference key="1">
    <citation type="journal article" date="2006" name="J. Bacteriol.">
        <title>Comparative genomic evidence for a close relationship between the dimorphic prosthecate bacteria Hyphomonas neptunium and Caulobacter crescentus.</title>
        <authorList>
            <person name="Badger J.H."/>
            <person name="Hoover T.R."/>
            <person name="Brun Y.V."/>
            <person name="Weiner R.M."/>
            <person name="Laub M.T."/>
            <person name="Alexandre G."/>
            <person name="Mrazek J."/>
            <person name="Ren Q."/>
            <person name="Paulsen I.T."/>
            <person name="Nelson K.E."/>
            <person name="Khouri H.M."/>
            <person name="Radune D."/>
            <person name="Sosa J."/>
            <person name="Dodson R.J."/>
            <person name="Sullivan S.A."/>
            <person name="Rosovitz M.J."/>
            <person name="Madupu R."/>
            <person name="Brinkac L.M."/>
            <person name="Durkin A.S."/>
            <person name="Daugherty S.C."/>
            <person name="Kothari S.P."/>
            <person name="Giglio M.G."/>
            <person name="Zhou L."/>
            <person name="Haft D.H."/>
            <person name="Selengut J.D."/>
            <person name="Davidsen T.M."/>
            <person name="Yang Q."/>
            <person name="Zafar N."/>
            <person name="Ward N.L."/>
        </authorList>
    </citation>
    <scope>NUCLEOTIDE SEQUENCE [LARGE SCALE GENOMIC DNA]</scope>
    <source>
        <strain>ATCC 15444</strain>
    </source>
</reference>
<proteinExistence type="inferred from homology"/>
<comment type="function">
    <text evidence="1">Catalyzes the circularization of gamma-N-acetyl-alpha,gamma-diaminobutyric acid (ADABA) to ectoine (1,4,5,6-tetrahydro-2-methyl-4-pyrimidine carboxylic acid), which is an excellent osmoprotectant.</text>
</comment>
<comment type="catalytic activity">
    <reaction evidence="1">
        <text>(2S)-4-acetamido-2-aminobutanoate = L-ectoine + H2O</text>
        <dbReference type="Rhea" id="RHEA:17281"/>
        <dbReference type="ChEBI" id="CHEBI:15377"/>
        <dbReference type="ChEBI" id="CHEBI:58515"/>
        <dbReference type="ChEBI" id="CHEBI:58929"/>
        <dbReference type="EC" id="4.2.1.108"/>
    </reaction>
</comment>
<comment type="pathway">
    <text evidence="1">Amine and polyamine biosynthesis; ectoine biosynthesis; L-ectoine from L-aspartate 4-semialdehyde: step 3/3.</text>
</comment>
<comment type="similarity">
    <text evidence="1">Belongs to the ectoine synthase family.</text>
</comment>
<feature type="chain" id="PRO_1000067231" description="L-ectoine synthase">
    <location>
        <begin position="1"/>
        <end position="135"/>
    </location>
</feature>
<gene>
    <name evidence="1" type="primary">ectC</name>
    <name type="ordered locus">HNE_1641</name>
</gene>
<accession>Q0C1P4</accession>
<keyword id="KW-0456">Lyase</keyword>
<keyword id="KW-1185">Reference proteome</keyword>
<evidence type="ECO:0000255" key="1">
    <source>
        <dbReference type="HAMAP-Rule" id="MF_01255"/>
    </source>
</evidence>
<name>ECTC_HYPNA</name>
<sequence length="135" mass="14753">MIVRDLAKEILTDRRVDSDGWSSVRLLLKDDGMGFSFHITTIHAGAELHMHYKNHLESVFCMEGTGSITDLATGETHEIRPGVMYALNKNDKHILRANAGAPMMMACVFNPPVTGKEVHGEDGAYPADAALENSA</sequence>
<dbReference type="EC" id="4.2.1.108" evidence="1"/>
<dbReference type="EMBL" id="CP000158">
    <property type="protein sequence ID" value="ABI77652.1"/>
    <property type="molecule type" value="Genomic_DNA"/>
</dbReference>
<dbReference type="RefSeq" id="WP_011646649.1">
    <property type="nucleotide sequence ID" value="NC_008358.1"/>
</dbReference>
<dbReference type="SMR" id="Q0C1P4"/>
<dbReference type="STRING" id="228405.HNE_1641"/>
<dbReference type="KEGG" id="hne:HNE_1641"/>
<dbReference type="eggNOG" id="COG1917">
    <property type="taxonomic scope" value="Bacteria"/>
</dbReference>
<dbReference type="HOGENOM" id="CLU_154525_0_0_5"/>
<dbReference type="UniPathway" id="UPA00067">
    <property type="reaction ID" value="UER00123"/>
</dbReference>
<dbReference type="Proteomes" id="UP000001959">
    <property type="component" value="Chromosome"/>
</dbReference>
<dbReference type="GO" id="GO:0033990">
    <property type="term" value="F:ectoine synthase activity"/>
    <property type="evidence" value="ECO:0007669"/>
    <property type="project" value="UniProtKB-EC"/>
</dbReference>
<dbReference type="GO" id="GO:0019491">
    <property type="term" value="P:ectoine biosynthetic process"/>
    <property type="evidence" value="ECO:0007669"/>
    <property type="project" value="UniProtKB-UniRule"/>
</dbReference>
<dbReference type="CDD" id="cd06978">
    <property type="entry name" value="cupin_EctC"/>
    <property type="match status" value="1"/>
</dbReference>
<dbReference type="Gene3D" id="2.60.120.10">
    <property type="entry name" value="Jelly Rolls"/>
    <property type="match status" value="1"/>
</dbReference>
<dbReference type="HAMAP" id="MF_01255">
    <property type="entry name" value="Ectoine_synth"/>
    <property type="match status" value="1"/>
</dbReference>
<dbReference type="InterPro" id="IPR010462">
    <property type="entry name" value="Ectoine_synth"/>
</dbReference>
<dbReference type="InterPro" id="IPR014710">
    <property type="entry name" value="RmlC-like_jellyroll"/>
</dbReference>
<dbReference type="InterPro" id="IPR011051">
    <property type="entry name" value="RmlC_Cupin_sf"/>
</dbReference>
<dbReference type="NCBIfam" id="NF009806">
    <property type="entry name" value="PRK13290.1"/>
    <property type="match status" value="1"/>
</dbReference>
<dbReference type="PANTHER" id="PTHR39289">
    <property type="match status" value="1"/>
</dbReference>
<dbReference type="PANTHER" id="PTHR39289:SF1">
    <property type="entry name" value="L-ECTOINE SYNTHASE"/>
    <property type="match status" value="1"/>
</dbReference>
<dbReference type="Pfam" id="PF06339">
    <property type="entry name" value="Ectoine_synth"/>
    <property type="match status" value="1"/>
</dbReference>
<dbReference type="SUPFAM" id="SSF51182">
    <property type="entry name" value="RmlC-like cupins"/>
    <property type="match status" value="1"/>
</dbReference>